<organismHost>
    <name type="scientific">Solanum tuberosum</name>
    <name type="common">Potato</name>
    <dbReference type="NCBI Taxonomy" id="4113"/>
</organismHost>
<keyword id="KW-0167">Capsid protein</keyword>
<keyword id="KW-0238">DNA-binding</keyword>
<keyword id="KW-1048">Host nucleus</keyword>
<keyword id="KW-0945">Host-virus interaction</keyword>
<keyword id="KW-0479">Metal-binding</keyword>
<keyword id="KW-1185">Reference proteome</keyword>
<keyword id="KW-1140">T=1 icosahedral capsid protein</keyword>
<keyword id="KW-1163">Viral penetration into host nucleus</keyword>
<keyword id="KW-0946">Virion</keyword>
<keyword id="KW-1160">Virus entry into host cell</keyword>
<keyword id="KW-0862">Zinc</keyword>
<keyword id="KW-0863">Zinc-finger</keyword>
<accession>P27255</accession>
<comment type="function">
    <text>Encapsidates the viral DNA into characteristic twinned ('geminate') particles. Binds the genomic viral ssDNA and shuttles it into and out of the cell nucleus. The CP of bipartite geminiviruses is not required for cell-to-cell or systemic movement.</text>
</comment>
<comment type="subunit">
    <text evidence="1">Homomultimer. Binds to single-stranded and double-stranded viral DNA. Interacts (via nuclear localization signals) with host importin alpha-1a (By similarity).</text>
</comment>
<comment type="subcellular location">
    <subcellularLocation>
        <location evidence="4">Virion</location>
    </subcellularLocation>
    <subcellularLocation>
        <location evidence="1">Host nucleus</location>
    </subcellularLocation>
    <text evidence="1">It is actively transported into the host cell nucleus. It may be exported out of the nucleus through a nuclear export signal for cell-to-cell movement and spread (By similarity).</text>
</comment>
<comment type="similarity">
    <text evidence="4">Belongs to the geminiviridae capsid protein family.</text>
</comment>
<dbReference type="EMBL" id="D00940">
    <property type="protein sequence ID" value="BAA00779.1"/>
    <property type="molecule type" value="Genomic_DNA"/>
</dbReference>
<dbReference type="PIR" id="JU0367">
    <property type="entry name" value="QQCVP2"/>
</dbReference>
<dbReference type="RefSeq" id="NP_047238.1">
    <property type="nucleotide sequence ID" value="NC_001934.1"/>
</dbReference>
<dbReference type="SMR" id="P27255"/>
<dbReference type="GeneID" id="956388"/>
<dbReference type="KEGG" id="vg:956388"/>
<dbReference type="Proteomes" id="UP000006828">
    <property type="component" value="Genome"/>
</dbReference>
<dbReference type="GO" id="GO:0043657">
    <property type="term" value="C:host cell"/>
    <property type="evidence" value="ECO:0007669"/>
    <property type="project" value="GOC"/>
</dbReference>
<dbReference type="GO" id="GO:0042025">
    <property type="term" value="C:host cell nucleus"/>
    <property type="evidence" value="ECO:0007669"/>
    <property type="project" value="UniProtKB-SubCell"/>
</dbReference>
<dbReference type="GO" id="GO:0039615">
    <property type="term" value="C:T=1 icosahedral viral capsid"/>
    <property type="evidence" value="ECO:0007669"/>
    <property type="project" value="UniProtKB-KW"/>
</dbReference>
<dbReference type="GO" id="GO:0003677">
    <property type="term" value="F:DNA binding"/>
    <property type="evidence" value="ECO:0007669"/>
    <property type="project" value="UniProtKB-KW"/>
</dbReference>
<dbReference type="GO" id="GO:0005198">
    <property type="term" value="F:structural molecule activity"/>
    <property type="evidence" value="ECO:0007669"/>
    <property type="project" value="InterPro"/>
</dbReference>
<dbReference type="GO" id="GO:0008270">
    <property type="term" value="F:zinc ion binding"/>
    <property type="evidence" value="ECO:0007669"/>
    <property type="project" value="UniProtKB-KW"/>
</dbReference>
<dbReference type="GO" id="GO:0046718">
    <property type="term" value="P:symbiont entry into host cell"/>
    <property type="evidence" value="ECO:0007669"/>
    <property type="project" value="UniProtKB-KW"/>
</dbReference>
<dbReference type="GO" id="GO:0075732">
    <property type="term" value="P:viral penetration into host nucleus"/>
    <property type="evidence" value="ECO:0007669"/>
    <property type="project" value="UniProtKB-KW"/>
</dbReference>
<dbReference type="Gene3D" id="2.60.120.20">
    <property type="match status" value="1"/>
</dbReference>
<dbReference type="InterPro" id="IPR000650">
    <property type="entry name" value="Gem_coat_AR1"/>
</dbReference>
<dbReference type="InterPro" id="IPR000263">
    <property type="entry name" value="GV_A/BR1_coat"/>
</dbReference>
<dbReference type="InterPro" id="IPR029053">
    <property type="entry name" value="Viral_coat"/>
</dbReference>
<dbReference type="Pfam" id="PF00844">
    <property type="entry name" value="Gemini_coat"/>
    <property type="match status" value="1"/>
</dbReference>
<dbReference type="PRINTS" id="PR00224">
    <property type="entry name" value="GEMCOATAR1"/>
</dbReference>
<dbReference type="PRINTS" id="PR00223">
    <property type="entry name" value="GEMCOATARBR1"/>
</dbReference>
<protein>
    <recommendedName>
        <fullName>Capsid protein</fullName>
    </recommendedName>
    <alternativeName>
        <fullName>Coat protein</fullName>
        <shortName>CP</shortName>
    </alternativeName>
</protein>
<evidence type="ECO:0000250" key="1"/>
<evidence type="ECO:0000255" key="2"/>
<evidence type="ECO:0000256" key="3">
    <source>
        <dbReference type="SAM" id="MobiDB-lite"/>
    </source>
</evidence>
<evidence type="ECO:0000305" key="4"/>
<name>CAPSD_PYMVV</name>
<gene>
    <name type="ORF">AR1</name>
    <name type="ORF">AV1</name>
</gene>
<feature type="chain" id="PRO_0000222190" description="Capsid protein">
    <location>
        <begin position="1"/>
        <end position="251"/>
    </location>
</feature>
<feature type="zinc finger region" evidence="2">
    <location>
        <begin position="63"/>
        <end position="80"/>
    </location>
</feature>
<feature type="region of interest" description="Disordered" evidence="3">
    <location>
        <begin position="1"/>
        <end position="29"/>
    </location>
</feature>
<feature type="short sequence motif" description="Bipartite nuclear localization signal" evidence="2">
    <location>
        <begin position="3"/>
        <end position="20"/>
    </location>
</feature>
<feature type="short sequence motif" description="Nuclear localization signal" evidence="2">
    <location>
        <begin position="35"/>
        <end position="49"/>
    </location>
</feature>
<feature type="short sequence motif" description="Nuclear export signal" evidence="2">
    <location>
        <begin position="96"/>
        <end position="117"/>
    </location>
</feature>
<feature type="short sequence motif" description="Bipartite nuclear localization signal" evidence="2">
    <location>
        <begin position="195"/>
        <end position="242"/>
    </location>
</feature>
<feature type="compositionally biased region" description="Polar residues" evidence="3">
    <location>
        <begin position="12"/>
        <end position="25"/>
    </location>
</feature>
<reference key="1">
    <citation type="journal article" date="1991" name="J. Gen. Virol.">
        <title>The nucleotide sequence of the infectious cloned DNA components of potato yellow mosaic virus.</title>
        <authorList>
            <person name="Coutts R.H.A."/>
            <person name="Coffin R.S."/>
            <person name="Roberts E.J.F."/>
            <person name="Hamilton W.D.O."/>
        </authorList>
    </citation>
    <scope>NUCLEOTIDE SEQUENCE [GENOMIC DNA]</scope>
</reference>
<organism>
    <name type="scientific">Potato yellow mosaic virus (isolate Venezuela)</name>
    <name type="common">PYMV</name>
    <dbReference type="NCBI Taxonomy" id="223310"/>
    <lineage>
        <taxon>Viruses</taxon>
        <taxon>Monodnaviria</taxon>
        <taxon>Shotokuvirae</taxon>
        <taxon>Cressdnaviricota</taxon>
        <taxon>Repensiviricetes</taxon>
        <taxon>Geplafuvirales</taxon>
        <taxon>Geminiviridae</taxon>
        <taxon>Begomovirus</taxon>
        <taxon>Potato yellow mosaic virus</taxon>
    </lineage>
</organism>
<proteinExistence type="inferred from homology"/>
<sequence>MPKRDAPWRSMAGTSKVSRNANYSPRSGIGPRINKAAEWVNRPMYRKPRIYRTLRTPDVPRGCEGPCKVQSFEQRHDILHTGKVMCISDVTRGNGITHRVGKRFCVKSVYILGKIWMDENIKLKNHTNSVMFWLVRDRRPYGTPMDFGQVFNMFDNEPSTATVKNDLRDRYQVMHRFYGKVTGGQYASNEHAIVRRFWKVNNHVVYNHQEAGKYENHTENALLLYMACTHASNPVYATLKIRIYFYDSILN</sequence>